<comment type="function">
    <text evidence="1">Involved in the gluconeogenesis. Catalyzes stereospecifically the conversion of dihydroxyacetone phosphate (DHAP) to D-glyceraldehyde-3-phosphate (G3P).</text>
</comment>
<comment type="catalytic activity">
    <reaction evidence="1">
        <text>D-glyceraldehyde 3-phosphate = dihydroxyacetone phosphate</text>
        <dbReference type="Rhea" id="RHEA:18585"/>
        <dbReference type="ChEBI" id="CHEBI:57642"/>
        <dbReference type="ChEBI" id="CHEBI:59776"/>
        <dbReference type="EC" id="5.3.1.1"/>
    </reaction>
</comment>
<comment type="pathway">
    <text evidence="1">Carbohydrate biosynthesis; gluconeogenesis.</text>
</comment>
<comment type="pathway">
    <text evidence="1">Carbohydrate degradation; glycolysis; D-glyceraldehyde 3-phosphate from glycerone phosphate: step 1/1.</text>
</comment>
<comment type="subunit">
    <text evidence="1">Homodimer.</text>
</comment>
<comment type="subcellular location">
    <subcellularLocation>
        <location evidence="1">Cytoplasm</location>
    </subcellularLocation>
</comment>
<comment type="similarity">
    <text evidence="1">Belongs to the triosephosphate isomerase family.</text>
</comment>
<name>TPIS_SYNS3</name>
<accession>Q0IAV3</accession>
<feature type="chain" id="PRO_0000307584" description="Triosephosphate isomerase">
    <location>
        <begin position="1"/>
        <end position="243"/>
    </location>
</feature>
<feature type="active site" description="Electrophile" evidence="1">
    <location>
        <position position="96"/>
    </location>
</feature>
<feature type="active site" description="Proton acceptor" evidence="1">
    <location>
        <position position="165"/>
    </location>
</feature>
<feature type="binding site" evidence="1">
    <location>
        <begin position="9"/>
        <end position="11"/>
    </location>
    <ligand>
        <name>substrate</name>
    </ligand>
</feature>
<feature type="binding site" evidence="1">
    <location>
        <position position="171"/>
    </location>
    <ligand>
        <name>substrate</name>
    </ligand>
</feature>
<feature type="binding site" evidence="1">
    <location>
        <position position="204"/>
    </location>
    <ligand>
        <name>substrate</name>
    </ligand>
</feature>
<feature type="binding site" evidence="1">
    <location>
        <begin position="225"/>
        <end position="226"/>
    </location>
    <ligand>
        <name>substrate</name>
    </ligand>
</feature>
<proteinExistence type="inferred from homology"/>
<dbReference type="EC" id="5.3.1.1" evidence="1"/>
<dbReference type="EMBL" id="CP000435">
    <property type="protein sequence ID" value="ABI47611.1"/>
    <property type="molecule type" value="Genomic_DNA"/>
</dbReference>
<dbReference type="RefSeq" id="WP_011619140.1">
    <property type="nucleotide sequence ID" value="NC_008319.1"/>
</dbReference>
<dbReference type="SMR" id="Q0IAV3"/>
<dbReference type="STRING" id="64471.sync_1210"/>
<dbReference type="KEGG" id="syg:sync_1210"/>
<dbReference type="eggNOG" id="COG0149">
    <property type="taxonomic scope" value="Bacteria"/>
</dbReference>
<dbReference type="HOGENOM" id="CLU_024251_2_3_3"/>
<dbReference type="OrthoDB" id="9809429at2"/>
<dbReference type="UniPathway" id="UPA00109">
    <property type="reaction ID" value="UER00189"/>
</dbReference>
<dbReference type="UniPathway" id="UPA00138"/>
<dbReference type="Proteomes" id="UP000001961">
    <property type="component" value="Chromosome"/>
</dbReference>
<dbReference type="GO" id="GO:0005829">
    <property type="term" value="C:cytosol"/>
    <property type="evidence" value="ECO:0007669"/>
    <property type="project" value="TreeGrafter"/>
</dbReference>
<dbReference type="GO" id="GO:0004807">
    <property type="term" value="F:triose-phosphate isomerase activity"/>
    <property type="evidence" value="ECO:0007669"/>
    <property type="project" value="UniProtKB-UniRule"/>
</dbReference>
<dbReference type="GO" id="GO:0006094">
    <property type="term" value="P:gluconeogenesis"/>
    <property type="evidence" value="ECO:0007669"/>
    <property type="project" value="UniProtKB-UniRule"/>
</dbReference>
<dbReference type="GO" id="GO:0046166">
    <property type="term" value="P:glyceraldehyde-3-phosphate biosynthetic process"/>
    <property type="evidence" value="ECO:0007669"/>
    <property type="project" value="TreeGrafter"/>
</dbReference>
<dbReference type="GO" id="GO:0019563">
    <property type="term" value="P:glycerol catabolic process"/>
    <property type="evidence" value="ECO:0007669"/>
    <property type="project" value="TreeGrafter"/>
</dbReference>
<dbReference type="GO" id="GO:0006096">
    <property type="term" value="P:glycolytic process"/>
    <property type="evidence" value="ECO:0007669"/>
    <property type="project" value="UniProtKB-UniRule"/>
</dbReference>
<dbReference type="CDD" id="cd00311">
    <property type="entry name" value="TIM"/>
    <property type="match status" value="1"/>
</dbReference>
<dbReference type="FunFam" id="3.20.20.70:FF:000016">
    <property type="entry name" value="Triosephosphate isomerase"/>
    <property type="match status" value="1"/>
</dbReference>
<dbReference type="Gene3D" id="3.20.20.70">
    <property type="entry name" value="Aldolase class I"/>
    <property type="match status" value="1"/>
</dbReference>
<dbReference type="HAMAP" id="MF_00147_B">
    <property type="entry name" value="TIM_B"/>
    <property type="match status" value="1"/>
</dbReference>
<dbReference type="InterPro" id="IPR013785">
    <property type="entry name" value="Aldolase_TIM"/>
</dbReference>
<dbReference type="InterPro" id="IPR035990">
    <property type="entry name" value="TIM_sf"/>
</dbReference>
<dbReference type="InterPro" id="IPR022896">
    <property type="entry name" value="TrioseP_Isoase_bac/euk"/>
</dbReference>
<dbReference type="InterPro" id="IPR000652">
    <property type="entry name" value="Triosephosphate_isomerase"/>
</dbReference>
<dbReference type="InterPro" id="IPR020861">
    <property type="entry name" value="Triosephosphate_isomerase_AS"/>
</dbReference>
<dbReference type="NCBIfam" id="TIGR00419">
    <property type="entry name" value="tim"/>
    <property type="match status" value="1"/>
</dbReference>
<dbReference type="PANTHER" id="PTHR21139">
    <property type="entry name" value="TRIOSEPHOSPHATE ISOMERASE"/>
    <property type="match status" value="1"/>
</dbReference>
<dbReference type="PANTHER" id="PTHR21139:SF42">
    <property type="entry name" value="TRIOSEPHOSPHATE ISOMERASE"/>
    <property type="match status" value="1"/>
</dbReference>
<dbReference type="Pfam" id="PF00121">
    <property type="entry name" value="TIM"/>
    <property type="match status" value="1"/>
</dbReference>
<dbReference type="SUPFAM" id="SSF51351">
    <property type="entry name" value="Triosephosphate isomerase (TIM)"/>
    <property type="match status" value="1"/>
</dbReference>
<dbReference type="PROSITE" id="PS00171">
    <property type="entry name" value="TIM_1"/>
    <property type="match status" value="1"/>
</dbReference>
<dbReference type="PROSITE" id="PS51440">
    <property type="entry name" value="TIM_2"/>
    <property type="match status" value="1"/>
</dbReference>
<gene>
    <name evidence="1" type="primary">tpiA</name>
    <name type="ordered locus">sync_1210</name>
</gene>
<organism>
    <name type="scientific">Synechococcus sp. (strain CC9311)</name>
    <dbReference type="NCBI Taxonomy" id="64471"/>
    <lineage>
        <taxon>Bacteria</taxon>
        <taxon>Bacillati</taxon>
        <taxon>Cyanobacteriota</taxon>
        <taxon>Cyanophyceae</taxon>
        <taxon>Synechococcales</taxon>
        <taxon>Synechococcaceae</taxon>
        <taxon>Synechococcus</taxon>
    </lineage>
</organism>
<keyword id="KW-0963">Cytoplasm</keyword>
<keyword id="KW-0312">Gluconeogenesis</keyword>
<keyword id="KW-0324">Glycolysis</keyword>
<keyword id="KW-0413">Isomerase</keyword>
<keyword id="KW-1185">Reference proteome</keyword>
<sequence>MRKPVIAGNWKMHMTCAQARAWIGTFLPLIAELPNDRHLVVAPPFTAISTLAELSEGTRLELSSQNVHWEGEGAYTAEISPSMLKEHNVQYAIVGHSEPRKYFSESDEQINHRARSAQTNGLIPIVCVGESDEQRSRGEAERVIRRQVEQGLEGLDPSQLVVAYEPIWAIGTGKTCEASEANRICGLIRSWVGSPDLIIQYGGSVKPGNIDQLMGMSDIDGVLVGGASLDPEGFGRIANYVKS</sequence>
<protein>
    <recommendedName>
        <fullName evidence="1">Triosephosphate isomerase</fullName>
        <shortName evidence="1">TIM</shortName>
        <shortName evidence="1">TPI</shortName>
        <ecNumber evidence="1">5.3.1.1</ecNumber>
    </recommendedName>
    <alternativeName>
        <fullName evidence="1">Triose-phosphate isomerase</fullName>
    </alternativeName>
</protein>
<reference key="1">
    <citation type="journal article" date="2006" name="Proc. Natl. Acad. Sci. U.S.A.">
        <title>Genome sequence of Synechococcus CC9311: insights into adaptation to a coastal environment.</title>
        <authorList>
            <person name="Palenik B."/>
            <person name="Ren Q."/>
            <person name="Dupont C.L."/>
            <person name="Myers G.S."/>
            <person name="Heidelberg J.F."/>
            <person name="Badger J.H."/>
            <person name="Madupu R."/>
            <person name="Nelson W.C."/>
            <person name="Brinkac L.M."/>
            <person name="Dodson R.J."/>
            <person name="Durkin A.S."/>
            <person name="Daugherty S.C."/>
            <person name="Sullivan S.A."/>
            <person name="Khouri H."/>
            <person name="Mohamoud Y."/>
            <person name="Halpin R."/>
            <person name="Paulsen I.T."/>
        </authorList>
    </citation>
    <scope>NUCLEOTIDE SEQUENCE [LARGE SCALE GENOMIC DNA]</scope>
    <source>
        <strain>CC9311</strain>
    </source>
</reference>
<evidence type="ECO:0000255" key="1">
    <source>
        <dbReference type="HAMAP-Rule" id="MF_00147"/>
    </source>
</evidence>